<organism>
    <name type="scientific">Mus musculus</name>
    <name type="common">Mouse</name>
    <dbReference type="NCBI Taxonomy" id="10090"/>
    <lineage>
        <taxon>Eukaryota</taxon>
        <taxon>Metazoa</taxon>
        <taxon>Chordata</taxon>
        <taxon>Craniata</taxon>
        <taxon>Vertebrata</taxon>
        <taxon>Euteleostomi</taxon>
        <taxon>Mammalia</taxon>
        <taxon>Eutheria</taxon>
        <taxon>Euarchontoglires</taxon>
        <taxon>Glires</taxon>
        <taxon>Rodentia</taxon>
        <taxon>Myomorpha</taxon>
        <taxon>Muroidea</taxon>
        <taxon>Muridae</taxon>
        <taxon>Murinae</taxon>
        <taxon>Mus</taxon>
        <taxon>Mus</taxon>
    </lineage>
</organism>
<reference evidence="20 21" key="1">
    <citation type="journal article" date="2001" name="Proc. Natl. Acad. Sci. U.S.A.">
        <title>The Abl-related gene (Arg) nonreceptor tyrosine kinase uses two F-actin-binding domains to bundle F-actin.</title>
        <authorList>
            <person name="Wang Y."/>
            <person name="Miller A.L."/>
            <person name="Mooseker M.S."/>
            <person name="Koleske A.J."/>
        </authorList>
    </citation>
    <scope>NUCLEOTIDE SEQUENCE [MRNA]</scope>
    <scope>FUNCTION</scope>
    <scope>DOMAIN</scope>
    <scope>SUBCELLULAR LOCATION</scope>
    <scope>ACTIN-BINDING</scope>
    <source>
        <strain evidence="21">129/SvJ</strain>
    </source>
</reference>
<reference evidence="20 21" key="2">
    <citation type="journal article" date="2003" name="Mol. Cell. Biol.">
        <title>Two distinct phosphorylation pathways have additive effects on Abl family kinase activation.</title>
        <authorList>
            <person name="Tanis K.Q."/>
            <person name="Veach D."/>
            <person name="Duewel H.S."/>
            <person name="Bornmann W.G."/>
            <person name="Koleske A.J."/>
        </authorList>
    </citation>
    <scope>NUCLEOTIDE SEQUENCE [MRNA]</scope>
    <scope>CAP DOMAIN</scope>
    <scope>FUNCTION</scope>
    <scope>ACTIVITY REGULATION</scope>
    <scope>INTERACTION WITH CRK</scope>
    <scope>PHOSPHORYLATION AT TYR-272; TYR-439; TYR-568 AND TYR-684</scope>
    <scope>MUTAGENESIS OF TYR-272; LYS-317; TYR-439; TYR-568 AND TYR-684</scope>
    <source>
        <strain evidence="21">129/SvJ</strain>
    </source>
</reference>
<reference key="3">
    <citation type="journal article" date="1998" name="Neuron">
        <title>Essential roles for the Abl and Arg tyrosine kinases in neurulation.</title>
        <authorList>
            <person name="Koleske A.J."/>
            <person name="Gifford A.M."/>
            <person name="Scott M.L."/>
            <person name="Nee M."/>
            <person name="Bronson R.T."/>
            <person name="Miczek K.A."/>
            <person name="Baltimore D."/>
        </authorList>
    </citation>
    <scope>DISRUPTION PHENOTYPE</scope>
    <scope>TISSUE SPECIFICITY</scope>
    <scope>FUNCTION</scope>
</reference>
<reference key="4">
    <citation type="journal article" date="2001" name="J. Biol. Chem.">
        <title>Inhibition of cell migration by Abl family tyrosine kinases through uncoupling of Crk-CAS complexes.</title>
        <authorList>
            <person name="Kain K.H."/>
            <person name="Klemke R.L."/>
        </authorList>
    </citation>
    <scope>FUNCTION</scope>
</reference>
<reference key="5">
    <citation type="journal article" date="2003" name="J. Cell Sci.">
        <title>Regulation of F-actin-dependent processes by the Abl family of tyrosine kinases.</title>
        <authorList>
            <person name="Woodring P.J."/>
            <person name="Hunter T."/>
            <person name="Wang J.Y."/>
        </authorList>
    </citation>
    <scope>REVIEW ON FUNCTION</scope>
</reference>
<reference key="6">
    <citation type="journal article" date="2004" name="Mol. Cell. Biol.">
        <title>Bidirectional signaling links the Abelson kinases to the platelet-derived growth factor receptor.</title>
        <authorList>
            <person name="Plattner R."/>
            <person name="Koleske A.J."/>
            <person name="Kazlauskas A."/>
            <person name="Pendergast A.M."/>
        </authorList>
    </citation>
    <scope>FUNCTION</scope>
    <scope>ACTIVITY REGULATION</scope>
    <scope>PHOSPHORYLATION</scope>
</reference>
<reference key="7">
    <citation type="journal article" date="2004" name="Trends Cell Biol.">
        <title>How do Abl family kinases regulate cell shape and movement?</title>
        <authorList>
            <person name="Hernandez S.E."/>
            <person name="Krishnaswami M."/>
            <person name="Miller A.L."/>
            <person name="Koleske A.J."/>
        </authorList>
    </citation>
    <scope>REVIEW ON FUNCTION</scope>
</reference>
<reference key="8">
    <citation type="journal article" date="2006" name="Mol. Biol. Cell">
        <title>Integrin signaling through Arg activates p190RhoGAP by promoting its binding to p120RasGAP and recruitment to the membrane.</title>
        <authorList>
            <person name="Bradley W.D."/>
            <person name="Hernandez S.E."/>
            <person name="Settleman J."/>
            <person name="Koleske A.J."/>
        </authorList>
    </citation>
    <scope>FUNCTION</scope>
</reference>
<reference key="9">
    <citation type="journal article" date="2007" name="Biochemistry">
        <title>Use of a chemical genetic technique to identify myosin IIb as a substrate of the Abl-related gene (Arg) tyrosine kinase.</title>
        <authorList>
            <person name="Boyle S.N."/>
            <person name="Koleske A.J."/>
        </authorList>
    </citation>
    <scope>FUNCTION</scope>
</reference>
<reference key="10">
    <citation type="journal article" date="2008" name="Trends Biochem. Sci.">
        <title>Emerging roles of Abl family tyrosine kinases in microbial pathogenesis.</title>
        <authorList>
            <person name="Backert S."/>
            <person name="Feller S.M."/>
            <person name="Wessler S."/>
        </authorList>
    </citation>
    <scope>REVIEW ON FUNCTION</scope>
</reference>
<reference key="11">
    <citation type="journal article" date="2009" name="Immunity">
        <title>The phagosomal proteome in interferon-gamma-activated macrophages.</title>
        <authorList>
            <person name="Trost M."/>
            <person name="English L."/>
            <person name="Lemieux S."/>
            <person name="Courcelles M."/>
            <person name="Desjardins M."/>
            <person name="Thibault P."/>
        </authorList>
    </citation>
    <scope>PHOSPHORYLATION [LARGE SCALE ANALYSIS] AT SER-621; SER-632 AND SER-936</scope>
    <scope>IDENTIFICATION BY MASS SPECTROMETRY [LARGE SCALE ANALYSIS]</scope>
</reference>
<reference key="12">
    <citation type="journal article" date="2010" name="Cell">
        <title>A tissue-specific atlas of mouse protein phosphorylation and expression.</title>
        <authorList>
            <person name="Huttlin E.L."/>
            <person name="Jedrychowski M.P."/>
            <person name="Elias J.E."/>
            <person name="Goswami T."/>
            <person name="Rad R."/>
            <person name="Beausoleil S.A."/>
            <person name="Villen J."/>
            <person name="Haas W."/>
            <person name="Sowa M.E."/>
            <person name="Gygi S.P."/>
        </authorList>
    </citation>
    <scope>PHOSPHORYLATION [LARGE SCALE ANALYSIS] AT SER-621; SER-632 AND SER-822</scope>
    <scope>IDENTIFICATION BY MASS SPECTROMETRY [LARGE SCALE ANALYSIS]</scope>
    <source>
        <tissue>Brain</tissue>
        <tissue>Heart</tissue>
        <tissue>Kidney</tissue>
        <tissue>Lung</tissue>
        <tissue>Pancreas</tissue>
        <tissue>Testis</tissue>
    </source>
</reference>
<reference key="13">
    <citation type="journal article" date="2010" name="Sci. Signal.">
        <title>ABL tyrosine kinases: evolution of function, regulation, and specificity.</title>
        <authorList>
            <person name="Colicelli J."/>
        </authorList>
    </citation>
    <scope>REVIEW ON FUNCTION</scope>
    <scope>DOMAIN</scope>
</reference>
<reference key="14">
    <citation type="journal article" date="2012" name="Sci. Signal.">
        <title>Abl family kinases modulate T cell-mediated inflammation and chemokine-induced migration through the adaptor HEF1 and the GTPase Rap1.</title>
        <authorList>
            <person name="Gu J.J."/>
            <person name="Lavau C.P."/>
            <person name="Pugacheva E."/>
            <person name="Soderblom E.J."/>
            <person name="Moseley M.A."/>
            <person name="Pendergast A.M."/>
        </authorList>
    </citation>
    <scope>FUNCTION</scope>
    <scope>DISRUPTION PHENOTYPE</scope>
</reference>
<protein>
    <recommendedName>
        <fullName>Tyrosine-protein kinase ABL2</fullName>
        <ecNumber>2.7.10.2</ecNumber>
    </recommendedName>
    <alternativeName>
        <fullName>Abelson murine leukemia viral oncogene homolog 2</fullName>
    </alternativeName>
    <alternativeName>
        <fullName>Abelson tyrosine-protein kinase 2</fullName>
    </alternativeName>
    <alternativeName>
        <fullName>Abelson-related gene protein</fullName>
    </alternativeName>
    <alternativeName>
        <fullName>Tyrosine-protein kinase ARG</fullName>
    </alternativeName>
</protein>
<accession>Q4JIM5</accession>
<proteinExistence type="evidence at protein level"/>
<dbReference type="EC" id="2.7.10.2"/>
<dbReference type="EMBL" id="DQ084361">
    <property type="protein sequence ID" value="AAY86039.1"/>
    <property type="molecule type" value="mRNA"/>
</dbReference>
<dbReference type="CCDS" id="CCDS15393.1"/>
<dbReference type="PDB" id="4XLI">
    <property type="method" value="X-ray"/>
    <property type="resolution" value="2.50 A"/>
    <property type="chains" value="A/B=279-546"/>
</dbReference>
<dbReference type="PDBsum" id="4XLI"/>
<dbReference type="SMR" id="Q4JIM5"/>
<dbReference type="CORUM" id="Q4JIM5"/>
<dbReference type="DIP" id="DIP-60989N"/>
<dbReference type="FunCoup" id="Q4JIM5">
    <property type="interactions" value="870"/>
</dbReference>
<dbReference type="IntAct" id="Q4JIM5">
    <property type="interactions" value="4"/>
</dbReference>
<dbReference type="STRING" id="10090.ENSMUSP00000027888"/>
<dbReference type="ChEMBL" id="CHEMBL5222"/>
<dbReference type="GlyGen" id="Q4JIM5">
    <property type="glycosylation" value="7 sites, 3 N-linked glycans (2 sites), 1 O-linked glycan (3 sites)"/>
</dbReference>
<dbReference type="iPTMnet" id="Q4JIM5"/>
<dbReference type="PhosphoSitePlus" id="Q4JIM5"/>
<dbReference type="jPOST" id="Q4JIM5"/>
<dbReference type="PaxDb" id="10090-ENSMUSP00000027888"/>
<dbReference type="PeptideAtlas" id="Q4JIM5"/>
<dbReference type="ProteomicsDB" id="285830"/>
<dbReference type="Pumba" id="Q4JIM5"/>
<dbReference type="AGR" id="MGI:87860"/>
<dbReference type="MGI" id="MGI:87860">
    <property type="gene designation" value="Abl2"/>
</dbReference>
<dbReference type="eggNOG" id="KOG4278">
    <property type="taxonomic scope" value="Eukaryota"/>
</dbReference>
<dbReference type="InParanoid" id="Q4JIM5"/>
<dbReference type="PhylomeDB" id="Q4JIM5"/>
<dbReference type="Reactome" id="R-MMU-428890">
    <property type="pathway name" value="Role of ABL in ROBO-SLIT signaling"/>
</dbReference>
<dbReference type="Reactome" id="R-MMU-9013149">
    <property type="pathway name" value="RAC1 GTPase cycle"/>
</dbReference>
<dbReference type="Reactome" id="R-MMU-9013423">
    <property type="pathway name" value="RAC3 GTPase cycle"/>
</dbReference>
<dbReference type="Reactome" id="R-MMU-9706369">
    <property type="pathway name" value="Negative regulation of FLT3"/>
</dbReference>
<dbReference type="ChiTaRS" id="Abl2">
    <property type="organism name" value="mouse"/>
</dbReference>
<dbReference type="EvolutionaryTrace" id="Q4JIM5"/>
<dbReference type="PRO" id="PR:Q4JIM5"/>
<dbReference type="Proteomes" id="UP000000589">
    <property type="component" value="Unplaced"/>
</dbReference>
<dbReference type="RNAct" id="Q4JIM5">
    <property type="molecule type" value="protein"/>
</dbReference>
<dbReference type="GO" id="GO:0015629">
    <property type="term" value="C:actin cytoskeleton"/>
    <property type="evidence" value="ECO:0000314"/>
    <property type="project" value="MGI"/>
</dbReference>
<dbReference type="GO" id="GO:0031410">
    <property type="term" value="C:cytoplasmic vesicle"/>
    <property type="evidence" value="ECO:0000304"/>
    <property type="project" value="MGI"/>
</dbReference>
<dbReference type="GO" id="GO:0043197">
    <property type="term" value="C:dendritic spine"/>
    <property type="evidence" value="ECO:0000314"/>
    <property type="project" value="MGI"/>
</dbReference>
<dbReference type="GO" id="GO:0098978">
    <property type="term" value="C:glutamatergic synapse"/>
    <property type="evidence" value="ECO:0000314"/>
    <property type="project" value="SynGO"/>
</dbReference>
<dbReference type="GO" id="GO:0030027">
    <property type="term" value="C:lamellipodium"/>
    <property type="evidence" value="ECO:0000314"/>
    <property type="project" value="MGI"/>
</dbReference>
<dbReference type="GO" id="GO:0001891">
    <property type="term" value="C:phagocytic cup"/>
    <property type="evidence" value="ECO:0000314"/>
    <property type="project" value="MGI"/>
</dbReference>
<dbReference type="GO" id="GO:0098794">
    <property type="term" value="C:postsynapse"/>
    <property type="evidence" value="ECO:0000314"/>
    <property type="project" value="SynGO"/>
</dbReference>
<dbReference type="GO" id="GO:0005524">
    <property type="term" value="F:ATP binding"/>
    <property type="evidence" value="ECO:0007669"/>
    <property type="project" value="UniProtKB-KW"/>
</dbReference>
<dbReference type="GO" id="GO:0000287">
    <property type="term" value="F:magnesium ion binding"/>
    <property type="evidence" value="ECO:0000314"/>
    <property type="project" value="UniProtKB"/>
</dbReference>
<dbReference type="GO" id="GO:0030145">
    <property type="term" value="F:manganese ion binding"/>
    <property type="evidence" value="ECO:0000314"/>
    <property type="project" value="UniProtKB"/>
</dbReference>
<dbReference type="GO" id="GO:0004715">
    <property type="term" value="F:non-membrane spanning protein tyrosine kinase activity"/>
    <property type="evidence" value="ECO:0007669"/>
    <property type="project" value="UniProtKB-EC"/>
</dbReference>
<dbReference type="GO" id="GO:0004713">
    <property type="term" value="F:protein tyrosine kinase activity"/>
    <property type="evidence" value="ECO:0000314"/>
    <property type="project" value="UniProtKB"/>
</dbReference>
<dbReference type="GO" id="GO:0030036">
    <property type="term" value="P:actin cytoskeleton organization"/>
    <property type="evidence" value="ECO:0000314"/>
    <property type="project" value="UniProtKB"/>
</dbReference>
<dbReference type="GO" id="GO:0051017">
    <property type="term" value="P:actin filament bundle assembly"/>
    <property type="evidence" value="ECO:0000314"/>
    <property type="project" value="MGI"/>
</dbReference>
<dbReference type="GO" id="GO:0007015">
    <property type="term" value="P:actin filament organization"/>
    <property type="evidence" value="ECO:0000314"/>
    <property type="project" value="MGI"/>
</dbReference>
<dbReference type="GO" id="GO:0007628">
    <property type="term" value="P:adult walking behavior"/>
    <property type="evidence" value="ECO:0000315"/>
    <property type="project" value="MGI"/>
</dbReference>
<dbReference type="GO" id="GO:0002118">
    <property type="term" value="P:aggressive behavior"/>
    <property type="evidence" value="ECO:0000315"/>
    <property type="project" value="MGI"/>
</dbReference>
<dbReference type="GO" id="GO:0046632">
    <property type="term" value="P:alpha-beta T cell differentiation"/>
    <property type="evidence" value="ECO:0000316"/>
    <property type="project" value="MGI"/>
</dbReference>
<dbReference type="GO" id="GO:0031223">
    <property type="term" value="P:auditory behavior"/>
    <property type="evidence" value="ECO:0000315"/>
    <property type="project" value="MGI"/>
</dbReference>
<dbReference type="GO" id="GO:0060020">
    <property type="term" value="P:Bergmann glial cell differentiation"/>
    <property type="evidence" value="ECO:0000316"/>
    <property type="project" value="MGI"/>
</dbReference>
<dbReference type="GO" id="GO:0007249">
    <property type="term" value="P:canonical NF-kappaB signal transduction"/>
    <property type="evidence" value="ECO:0000316"/>
    <property type="project" value="MGI"/>
</dbReference>
<dbReference type="GO" id="GO:0098609">
    <property type="term" value="P:cell-cell adhesion"/>
    <property type="evidence" value="ECO:0000316"/>
    <property type="project" value="MGI"/>
</dbReference>
<dbReference type="GO" id="GO:0021587">
    <property type="term" value="P:cerebellum morphogenesis"/>
    <property type="evidence" value="ECO:0000316"/>
    <property type="project" value="MGI"/>
</dbReference>
<dbReference type="GO" id="GO:0072359">
    <property type="term" value="P:circulatory system development"/>
    <property type="evidence" value="ECO:0000316"/>
    <property type="project" value="MGI"/>
</dbReference>
<dbReference type="GO" id="GO:0048813">
    <property type="term" value="P:dendrite morphogenesis"/>
    <property type="evidence" value="ECO:0000315"/>
    <property type="project" value="MGI"/>
</dbReference>
<dbReference type="GO" id="GO:0097062">
    <property type="term" value="P:dendritic spine maintenance"/>
    <property type="evidence" value="ECO:0000315"/>
    <property type="project" value="MGI"/>
</dbReference>
<dbReference type="GO" id="GO:1904157">
    <property type="term" value="P:DN4 thymocyte differentiation"/>
    <property type="evidence" value="ECO:0000316"/>
    <property type="project" value="MGI"/>
</dbReference>
<dbReference type="GO" id="GO:0007173">
    <property type="term" value="P:epidermal growth factor receptor signaling pathway"/>
    <property type="evidence" value="ECO:0000316"/>
    <property type="project" value="MGI"/>
</dbReference>
<dbReference type="GO" id="GO:0051649">
    <property type="term" value="P:establishment of localization in cell"/>
    <property type="evidence" value="ECO:0000315"/>
    <property type="project" value="MGI"/>
</dbReference>
<dbReference type="GO" id="GO:0035640">
    <property type="term" value="P:exploration behavior"/>
    <property type="evidence" value="ECO:0000316"/>
    <property type="project" value="MGI"/>
</dbReference>
<dbReference type="GO" id="GO:0007612">
    <property type="term" value="P:learning"/>
    <property type="evidence" value="ECO:0000315"/>
    <property type="project" value="MGI"/>
</dbReference>
<dbReference type="GO" id="GO:0035264">
    <property type="term" value="P:multicellular organism growth"/>
    <property type="evidence" value="ECO:0000315"/>
    <property type="project" value="MGI"/>
</dbReference>
<dbReference type="GO" id="GO:0022408">
    <property type="term" value="P:negative regulation of cell-cell adhesion"/>
    <property type="evidence" value="ECO:0000316"/>
    <property type="project" value="MGI"/>
</dbReference>
<dbReference type="GO" id="GO:2000352">
    <property type="term" value="P:negative regulation of endothelial cell apoptotic process"/>
    <property type="evidence" value="ECO:0000316"/>
    <property type="project" value="MGI"/>
</dbReference>
<dbReference type="GO" id="GO:0035024">
    <property type="term" value="P:negative regulation of Rho protein signal transduction"/>
    <property type="evidence" value="ECO:0000316"/>
    <property type="project" value="MGI"/>
</dbReference>
<dbReference type="GO" id="GO:0001843">
    <property type="term" value="P:neural tube closure"/>
    <property type="evidence" value="ECO:0000316"/>
    <property type="project" value="MGI"/>
</dbReference>
<dbReference type="GO" id="GO:0060563">
    <property type="term" value="P:neuroepithelial cell differentiation"/>
    <property type="evidence" value="ECO:0000316"/>
    <property type="project" value="MGI"/>
</dbReference>
<dbReference type="GO" id="GO:0050885">
    <property type="term" value="P:neuromuscular process controlling balance"/>
    <property type="evidence" value="ECO:0000315"/>
    <property type="project" value="MGI"/>
</dbReference>
<dbReference type="GO" id="GO:0030182">
    <property type="term" value="P:neuron differentiation"/>
    <property type="evidence" value="ECO:0000316"/>
    <property type="project" value="MGI"/>
</dbReference>
<dbReference type="GO" id="GO:0016322">
    <property type="term" value="P:neuron remodeling"/>
    <property type="evidence" value="ECO:0000315"/>
    <property type="project" value="MGI"/>
</dbReference>
<dbReference type="GO" id="GO:0018108">
    <property type="term" value="P:peptidyl-tyrosine phosphorylation"/>
    <property type="evidence" value="ECO:0000314"/>
    <property type="project" value="UniProtKB"/>
</dbReference>
<dbReference type="GO" id="GO:0006909">
    <property type="term" value="P:phagocytosis"/>
    <property type="evidence" value="ECO:0000315"/>
    <property type="project" value="MGI"/>
</dbReference>
<dbReference type="GO" id="GO:0007200">
    <property type="term" value="P:phospholipase C-activating G protein-coupled receptor signaling pathway"/>
    <property type="evidence" value="ECO:0000266"/>
    <property type="project" value="MGI"/>
</dbReference>
<dbReference type="GO" id="GO:0048008">
    <property type="term" value="P:platelet-derived growth factor receptor signaling pathway"/>
    <property type="evidence" value="ECO:0000316"/>
    <property type="project" value="MGI"/>
</dbReference>
<dbReference type="GO" id="GO:0043123">
    <property type="term" value="P:positive regulation of canonical NF-kappaB signal transduction"/>
    <property type="evidence" value="ECO:0000316"/>
    <property type="project" value="MGI"/>
</dbReference>
<dbReference type="GO" id="GO:0007204">
    <property type="term" value="P:positive regulation of cytosolic calcium ion concentration"/>
    <property type="evidence" value="ECO:0000266"/>
    <property type="project" value="MGI"/>
</dbReference>
<dbReference type="GO" id="GO:0070374">
    <property type="term" value="P:positive regulation of ERK1 and ERK2 cascade"/>
    <property type="evidence" value="ECO:0000316"/>
    <property type="project" value="MGI"/>
</dbReference>
<dbReference type="GO" id="GO:1903905">
    <property type="term" value="P:positive regulation of establishment of T cell polarity"/>
    <property type="evidence" value="ECO:0000315"/>
    <property type="project" value="UniProtKB"/>
</dbReference>
<dbReference type="GO" id="GO:0032743">
    <property type="term" value="P:positive regulation of interleukin-2 production"/>
    <property type="evidence" value="ECO:0000316"/>
    <property type="project" value="MGI"/>
</dbReference>
<dbReference type="GO" id="GO:0010976">
    <property type="term" value="P:positive regulation of neuron projection development"/>
    <property type="evidence" value="ECO:0000316"/>
    <property type="project" value="MGI"/>
</dbReference>
<dbReference type="GO" id="GO:2000406">
    <property type="term" value="P:positive regulation of T cell migration"/>
    <property type="evidence" value="ECO:0000315"/>
    <property type="project" value="UniProtKB"/>
</dbReference>
<dbReference type="GO" id="GO:0032729">
    <property type="term" value="P:positive regulation of type II interferon production"/>
    <property type="evidence" value="ECO:0000316"/>
    <property type="project" value="MGI"/>
</dbReference>
<dbReference type="GO" id="GO:2000096">
    <property type="term" value="P:positive regulation of Wnt signaling pathway, planar cell polarity pathway"/>
    <property type="evidence" value="ECO:0000316"/>
    <property type="project" value="MGI"/>
</dbReference>
<dbReference type="GO" id="GO:0009791">
    <property type="term" value="P:post-embryonic development"/>
    <property type="evidence" value="ECO:0000316"/>
    <property type="project" value="MGI"/>
</dbReference>
<dbReference type="GO" id="GO:0008104">
    <property type="term" value="P:protein localization"/>
    <property type="evidence" value="ECO:0000315"/>
    <property type="project" value="MGI"/>
</dbReference>
<dbReference type="GO" id="GO:0006468">
    <property type="term" value="P:protein phosphorylation"/>
    <property type="evidence" value="ECO:0000314"/>
    <property type="project" value="UniProtKB"/>
</dbReference>
<dbReference type="GO" id="GO:1903053">
    <property type="term" value="P:regulation of extracellular matrix organization"/>
    <property type="evidence" value="ECO:0000316"/>
    <property type="project" value="MGI"/>
</dbReference>
<dbReference type="GO" id="GO:0007266">
    <property type="term" value="P:Rho protein signal transduction"/>
    <property type="evidence" value="ECO:0000316"/>
    <property type="project" value="MGI"/>
</dbReference>
<dbReference type="GO" id="GO:0006930">
    <property type="term" value="P:substrate-dependent cell migration, cell extension"/>
    <property type="evidence" value="ECO:0000316"/>
    <property type="project" value="MGI"/>
</dbReference>
<dbReference type="GO" id="GO:0060074">
    <property type="term" value="P:synapse maturation"/>
    <property type="evidence" value="ECO:0000314"/>
    <property type="project" value="SynGO"/>
</dbReference>
<dbReference type="GO" id="GO:0008542">
    <property type="term" value="P:visual learning"/>
    <property type="evidence" value="ECO:0000316"/>
    <property type="project" value="MGI"/>
</dbReference>
<dbReference type="CDD" id="cd05052">
    <property type="entry name" value="PTKc_Abl"/>
    <property type="match status" value="1"/>
</dbReference>
<dbReference type="CDD" id="cd09935">
    <property type="entry name" value="SH2_ABL"/>
    <property type="match status" value="1"/>
</dbReference>
<dbReference type="CDD" id="cd11850">
    <property type="entry name" value="SH3_Abl"/>
    <property type="match status" value="1"/>
</dbReference>
<dbReference type="FunFam" id="1.10.510.10:FF:000070">
    <property type="entry name" value="Tyrosine-protein kinase"/>
    <property type="match status" value="1"/>
</dbReference>
<dbReference type="FunFam" id="1.20.120.330:FF:000003">
    <property type="entry name" value="Tyrosine-protein kinase"/>
    <property type="match status" value="1"/>
</dbReference>
<dbReference type="FunFam" id="2.30.30.40:FF:000010">
    <property type="entry name" value="Tyrosine-protein kinase"/>
    <property type="match status" value="1"/>
</dbReference>
<dbReference type="FunFam" id="3.30.200.20:FF:000037">
    <property type="entry name" value="Tyrosine-protein kinase"/>
    <property type="match status" value="1"/>
</dbReference>
<dbReference type="FunFam" id="3.30.505.10:FF:000004">
    <property type="entry name" value="Tyrosine-protein kinase"/>
    <property type="match status" value="1"/>
</dbReference>
<dbReference type="Gene3D" id="1.20.120.330">
    <property type="entry name" value="Nucleotidyltransferases domain 2"/>
    <property type="match status" value="1"/>
</dbReference>
<dbReference type="Gene3D" id="3.30.200.20">
    <property type="entry name" value="Phosphorylase Kinase, domain 1"/>
    <property type="match status" value="1"/>
</dbReference>
<dbReference type="Gene3D" id="3.30.505.10">
    <property type="entry name" value="SH2 domain"/>
    <property type="match status" value="1"/>
</dbReference>
<dbReference type="Gene3D" id="2.30.30.40">
    <property type="entry name" value="SH3 Domains"/>
    <property type="match status" value="1"/>
</dbReference>
<dbReference type="Gene3D" id="1.10.510.10">
    <property type="entry name" value="Transferase(Phosphotransferase) domain 1"/>
    <property type="match status" value="1"/>
</dbReference>
<dbReference type="InterPro" id="IPR035837">
    <property type="entry name" value="ABL_SH2"/>
</dbReference>
<dbReference type="InterPro" id="IPR015015">
    <property type="entry name" value="F-actin-binding"/>
</dbReference>
<dbReference type="InterPro" id="IPR011009">
    <property type="entry name" value="Kinase-like_dom_sf"/>
</dbReference>
<dbReference type="InterPro" id="IPR050198">
    <property type="entry name" value="Non-receptor_tyrosine_kinases"/>
</dbReference>
<dbReference type="InterPro" id="IPR000719">
    <property type="entry name" value="Prot_kinase_dom"/>
</dbReference>
<dbReference type="InterPro" id="IPR017441">
    <property type="entry name" value="Protein_kinase_ATP_BS"/>
</dbReference>
<dbReference type="InterPro" id="IPR001245">
    <property type="entry name" value="Ser-Thr/Tyr_kinase_cat_dom"/>
</dbReference>
<dbReference type="InterPro" id="IPR000980">
    <property type="entry name" value="SH2"/>
</dbReference>
<dbReference type="InterPro" id="IPR036860">
    <property type="entry name" value="SH2_dom_sf"/>
</dbReference>
<dbReference type="InterPro" id="IPR036028">
    <property type="entry name" value="SH3-like_dom_sf"/>
</dbReference>
<dbReference type="InterPro" id="IPR001452">
    <property type="entry name" value="SH3_domain"/>
</dbReference>
<dbReference type="InterPro" id="IPR008266">
    <property type="entry name" value="Tyr_kinase_AS"/>
</dbReference>
<dbReference type="InterPro" id="IPR020635">
    <property type="entry name" value="Tyr_kinase_cat_dom"/>
</dbReference>
<dbReference type="PANTHER" id="PTHR24418">
    <property type="entry name" value="TYROSINE-PROTEIN KINASE"/>
    <property type="match status" value="1"/>
</dbReference>
<dbReference type="Pfam" id="PF08919">
    <property type="entry name" value="F_actin_bind"/>
    <property type="match status" value="1"/>
</dbReference>
<dbReference type="Pfam" id="PF07714">
    <property type="entry name" value="PK_Tyr_Ser-Thr"/>
    <property type="match status" value="1"/>
</dbReference>
<dbReference type="Pfam" id="PF00017">
    <property type="entry name" value="SH2"/>
    <property type="match status" value="1"/>
</dbReference>
<dbReference type="Pfam" id="PF00018">
    <property type="entry name" value="SH3_1"/>
    <property type="match status" value="1"/>
</dbReference>
<dbReference type="PRINTS" id="PR00401">
    <property type="entry name" value="SH2DOMAIN"/>
</dbReference>
<dbReference type="PRINTS" id="PR00109">
    <property type="entry name" value="TYRKINASE"/>
</dbReference>
<dbReference type="SMART" id="SM00808">
    <property type="entry name" value="FABD"/>
    <property type="match status" value="1"/>
</dbReference>
<dbReference type="SMART" id="SM00252">
    <property type="entry name" value="SH2"/>
    <property type="match status" value="1"/>
</dbReference>
<dbReference type="SMART" id="SM00326">
    <property type="entry name" value="SH3"/>
    <property type="match status" value="1"/>
</dbReference>
<dbReference type="SMART" id="SM00219">
    <property type="entry name" value="TyrKc"/>
    <property type="match status" value="1"/>
</dbReference>
<dbReference type="SUPFAM" id="SSF56112">
    <property type="entry name" value="Protein kinase-like (PK-like)"/>
    <property type="match status" value="1"/>
</dbReference>
<dbReference type="SUPFAM" id="SSF55550">
    <property type="entry name" value="SH2 domain"/>
    <property type="match status" value="1"/>
</dbReference>
<dbReference type="SUPFAM" id="SSF50044">
    <property type="entry name" value="SH3-domain"/>
    <property type="match status" value="1"/>
</dbReference>
<dbReference type="PROSITE" id="PS00107">
    <property type="entry name" value="PROTEIN_KINASE_ATP"/>
    <property type="match status" value="1"/>
</dbReference>
<dbReference type="PROSITE" id="PS50011">
    <property type="entry name" value="PROTEIN_KINASE_DOM"/>
    <property type="match status" value="1"/>
</dbReference>
<dbReference type="PROSITE" id="PS00109">
    <property type="entry name" value="PROTEIN_KINASE_TYR"/>
    <property type="match status" value="1"/>
</dbReference>
<dbReference type="PROSITE" id="PS50001">
    <property type="entry name" value="SH2"/>
    <property type="match status" value="1"/>
</dbReference>
<dbReference type="PROSITE" id="PS50002">
    <property type="entry name" value="SH3"/>
    <property type="match status" value="1"/>
</dbReference>
<sequence length="1182" mass="128196">MGQQVGRVGEAPGLQQPQPRGIRGSSAARPSGRRRDPAGRTADAGFNVFTQHDHFASCVEDGFEGDKTGGSSPEVLHRPFGCDAESQALNEAIRWSSKENLLGATESDPNLFVALYDFVASGDNTLSITKGEKLRVLGYNQNGEWSEVRSKNGQGWVPSNYITPVNSLEKHSWYHGPVSRSAAEYLLSSLINGSFLVRESESSPGQLSISLRYEGRVYHYRINTTTDSKVYVTAESRFSTLAELVHHHSTVADGLVTTLHYPAPKCNKPTVYGVSPIHDKWEMERTDITMKHKLGGGQYGEVYVGVWKKYSLTVAVKTFKEDTMEVEEFLKEAAVMKEIKHPNLVQLLGVCTLEPPFYIVTEYMPYGNLLDYLRECSREEVTAVVLLYMATQISSAMEYLEKKNFIHRDLAARNCLVGENHVVKVADFGLSRLMTGDTYTAHAGAKFPIKWTAPESLAYNTFSIKSDVWAFGVLLWEIATYGMSPYPGIDLSQVYDLLEKGYRMEQPEGCPPKVYELMRACWKWSPADRPSFAETHQAFETMFHDSSISEEVAEELGRTASSSSVVPYLPRLPLLPSKTRTLRKQGENKENLDGGLDAAESLASSSAPAGFIRSTQASSGSPALPRKQRDKSPSSLLEDAKETCFTRDRKGGFFSSFMKKRNAPTPPKRSSSFREMENQPHKKYELTGNFSPVASLQNADGFSVAPSQQEPNLVPAKCYGGSFAQRNLCADDDSGGGGGSGTAGGGWSGITGFFTPRLIKKTLGLRAGKPTASDDTSKPFPRSNSTSSMSSGLPEQDRMAMTLPRNCQRSKLQLERTVSTSSQPEENVDRANDMLPKKSEEGAAPARERPKAKLLPRGATALPLRAPDPAITESDSPGVGVAGVAAAPKGKERNGGTRLGVAGVPEDGEQLGWSSPAKAVAVLPTTHNHKVPVLISPTLKHTPADVQLIGTDSQGNKFKLLSEHQVTSSGDKDRPRRVKPKCAPPPPPVMRLLQHPSTCSDPEEEPTAPPAGQHTPETQEGGKKAAPGPVPSSGKPGRPVMPPPQVPLPTSSISPAKMANGTAGTKVALRKTKQAAEKISADKISKEALLECADLLSSAITEPVPNSQLVDTGHQLLDYCSGYVDSIPQTRNKFAFREAVSKLELSLQELQVSSTAAGVPGTNPVLNNLLSCVQEISDVVQR</sequence>
<name>ABL2_MOUSE</name>
<comment type="function">
    <text evidence="11 12 13 14 15 16 18 19">Non-receptor tyrosine-protein kinase that plays an ABL1-overlapping role in key processes linked to cell growth and survival such as cytoskeleton remodeling in response to extracellular stimuli, cell motility and adhesion, receptor endocytosis, autophagy, DNA damage response and apoptosis. Coordinates actin remodeling through tyrosine phosphorylation of proteins controlling cytoskeleton dynamics like MYH10 (involved in movement); CTTN (involved in signaling); or TUBA1 and TUBB (microtubule subunits). Binds directly F-actin and regulates actin cytoskeletal structure through its F-actin-bundling activity. Involved in the regulation of cell adhesion and motility through phosphorylation of key regulators of these processes such as CRK, CRKL or DOK1. Required for adhesion-dependent phosphorylation of ARHGAP35 which promotes its association with RASA1, resulting in recruitment of ARHGAP35 to the cell periphery where it inhibits RHO. Phosphorylates multiple receptor tyrosine kinases like PDGFRB and other substrates which are involved in endocytosis regulation such as RIN1. In brain, may regulate neurotransmission by phosphorylating proteins at the synapse. Finally, functions as its own regulator through autocatalytic activity as well as through phosphorylation of its inhibitor, ABI1. Positively regulates chemokine-mediated T-cell migration, polarization, and homing to lymph nodes and immune-challenged tissues, potentially via activation of NEDD9/HEF1 and RAP1 (PubMed:22810897).</text>
</comment>
<comment type="catalytic activity">
    <reaction evidence="9 13">
        <text>L-tyrosyl-[protein] + ATP = O-phospho-L-tyrosyl-[protein] + ADP + H(+)</text>
        <dbReference type="Rhea" id="RHEA:10596"/>
        <dbReference type="Rhea" id="RHEA-COMP:10136"/>
        <dbReference type="Rhea" id="RHEA-COMP:20101"/>
        <dbReference type="ChEBI" id="CHEBI:15378"/>
        <dbReference type="ChEBI" id="CHEBI:30616"/>
        <dbReference type="ChEBI" id="CHEBI:46858"/>
        <dbReference type="ChEBI" id="CHEBI:61978"/>
        <dbReference type="ChEBI" id="CHEBI:456216"/>
        <dbReference type="EC" id="2.7.10.2"/>
    </reaction>
</comment>
<comment type="cofactor">
    <cofactor evidence="13">
        <name>Mg(2+)</name>
        <dbReference type="ChEBI" id="CHEBI:18420"/>
    </cofactor>
    <cofactor evidence="13">
        <name>Mn(2+)</name>
        <dbReference type="ChEBI" id="CHEBI:29035"/>
    </cofactor>
</comment>
<comment type="activity regulation">
    <text evidence="1 13 14">Stabilized in the inactive form by an association between the SH3 domain and the SH2-TK linker region, interactions of the N-terminal cap, and contributions from an N-terminal myristoyl group and phospholipids. Activated by autophosphorylation as well as by SRC-family kinase-mediated phosphorylation. Activated by RIN1 binding to the SH2 and SH3 domains (By similarity). Inhibited by imatinib mesylate (Gleevec). Phosphatidylinositol 4,5-bisphosphate (PIP2), a highly abundant phosphoinositide known to regulate cytoskeletal and membrane proteins, inhibits the tyrosine kinase activity.</text>
</comment>
<comment type="subunit">
    <text evidence="1">Interacts with PSMA7. Interacts with CTTN (By similarity). Found in a complex with ABL1, ABL2, CRK and UNC119; leading to the inhibition of CRK phosphorylation by ABL kinases (By similarity).</text>
</comment>
<comment type="subcellular location">
    <subcellularLocation>
        <location evidence="12">Cytoplasm</location>
        <location evidence="12">Cytoskeleton</location>
    </subcellularLocation>
</comment>
<comment type="tissue specificity">
    <text evidence="19">Most abundant in adult mouse brain, especially in synapse-rich regions.</text>
</comment>
<comment type="domain">
    <text evidence="12 17">Contains two distinct classes of F-actin-binding domains. Although both can each bind F-actin, the 2 are required to bundle actin filaments.</text>
</comment>
<comment type="PTM">
    <text evidence="1 13 14">Phosphorylated at Tyr-261 by ABL1 in response to oxidative stress (By similarity). Phosphorylated by PDGFRB.</text>
</comment>
<comment type="PTM">
    <text evidence="1">Polyubiquitinated. Polyubiquitination of ABL2 leads to degradation (By similarity).</text>
</comment>
<comment type="disruption phenotype">
    <text evidence="18 19">Leads to defects in neuronal function (PubMed:9883720). T-cells show impaired directional migration in response to the chemokines Cxcl12 or Ccl21 (PubMed:22810897). Abl1 and Abl2 double knockout mice have T-cells that show reduced chemokinesis and cell polarization in response to Icam1, Cxcl12 and Ccl21, subsequent Rap1 and Rac1 activation is reduced (PubMed:22810897). Additionally T-cells show decreased Cxcl12-induced tyrosine phosphorylation of Nedd9/Hef1 and reduced homing of T-cells to lymph nodes and immuno-challenged tissues (PubMed:22810897).</text>
</comment>
<comment type="similarity">
    <text evidence="6">Belongs to the protein kinase superfamily. Tyr protein kinase family. ABL subfamily.</text>
</comment>
<keyword id="KW-0002">3D-structure</keyword>
<keyword id="KW-0007">Acetylation</keyword>
<keyword id="KW-0067">ATP-binding</keyword>
<keyword id="KW-0130">Cell adhesion</keyword>
<keyword id="KW-0963">Cytoplasm</keyword>
<keyword id="KW-0206">Cytoskeleton</keyword>
<keyword id="KW-0418">Kinase</keyword>
<keyword id="KW-0449">Lipoprotein</keyword>
<keyword id="KW-0460">Magnesium</keyword>
<keyword id="KW-0464">Manganese</keyword>
<keyword id="KW-0479">Metal-binding</keyword>
<keyword id="KW-0519">Myristate</keyword>
<keyword id="KW-0547">Nucleotide-binding</keyword>
<keyword id="KW-0597">Phosphoprotein</keyword>
<keyword id="KW-1185">Reference proteome</keyword>
<keyword id="KW-0727">SH2 domain</keyword>
<keyword id="KW-0728">SH3 domain</keyword>
<keyword id="KW-0808">Transferase</keyword>
<keyword id="KW-0829">Tyrosine-protein kinase</keyword>
<keyword id="KW-0832">Ubl conjugation</keyword>
<gene>
    <name evidence="21 22" type="primary">Abl2</name>
    <name type="synonym">Arg</name>
</gene>
<feature type="initiator methionine" description="Removed">
    <location>
        <position position="1"/>
    </location>
</feature>
<feature type="chain" id="PRO_0000258019" description="Tyrosine-protein kinase ABL2">
    <location>
        <begin position="2"/>
        <end position="1182"/>
    </location>
</feature>
<feature type="domain" description="SH3" evidence="8">
    <location>
        <begin position="107"/>
        <end position="167"/>
    </location>
</feature>
<feature type="domain" description="SH2" evidence="7">
    <location>
        <begin position="173"/>
        <end position="263"/>
    </location>
</feature>
<feature type="domain" description="Protein kinase" evidence="6">
    <location>
        <begin position="288"/>
        <end position="539"/>
    </location>
</feature>
<feature type="region of interest" description="Disordered" evidence="10">
    <location>
        <begin position="1"/>
        <end position="42"/>
    </location>
</feature>
<feature type="region of interest" description="CAP">
    <location>
        <begin position="2"/>
        <end position="106"/>
    </location>
</feature>
<feature type="region of interest" description="Disordered" evidence="10">
    <location>
        <begin position="612"/>
        <end position="642"/>
    </location>
</feature>
<feature type="region of interest" description="Disordered" evidence="10">
    <location>
        <begin position="655"/>
        <end position="674"/>
    </location>
</feature>
<feature type="region of interest" description="F-actin-binding">
    <location>
        <begin position="695"/>
        <end position="930"/>
    </location>
</feature>
<feature type="region of interest" description="Disordered" evidence="10">
    <location>
        <begin position="765"/>
        <end position="796"/>
    </location>
</feature>
<feature type="region of interest" description="Disordered" evidence="10">
    <location>
        <begin position="809"/>
        <end position="858"/>
    </location>
</feature>
<feature type="region of interest" description="Disordered" evidence="10">
    <location>
        <begin position="964"/>
        <end position="1059"/>
    </location>
</feature>
<feature type="region of interest" description="F-actin-binding">
    <location>
        <begin position="1020"/>
        <end position="1182"/>
    </location>
</feature>
<feature type="short sequence motif" description="Kinase activation loop" evidence="1">
    <location>
        <begin position="427"/>
        <end position="451"/>
    </location>
</feature>
<feature type="short sequence motif" description="Nuclear localization signal" evidence="5">
    <location>
        <begin position="659"/>
        <end position="661"/>
    </location>
</feature>
<feature type="compositionally biased region" description="Low complexity" evidence="10">
    <location>
        <begin position="20"/>
        <end position="30"/>
    </location>
</feature>
<feature type="compositionally biased region" description="Polar residues" evidence="10">
    <location>
        <begin position="782"/>
        <end position="793"/>
    </location>
</feature>
<feature type="compositionally biased region" description="Polar residues" evidence="10">
    <location>
        <begin position="809"/>
        <end position="825"/>
    </location>
</feature>
<feature type="compositionally biased region" description="Basic and acidic residues" evidence="10">
    <location>
        <begin position="827"/>
        <end position="851"/>
    </location>
</feature>
<feature type="active site" description="Proton acceptor" evidence="3 6 9">
    <location>
        <position position="409"/>
    </location>
</feature>
<feature type="binding site" evidence="3 6">
    <location>
        <begin position="294"/>
        <end position="302"/>
    </location>
    <ligand>
        <name>ATP</name>
        <dbReference type="ChEBI" id="CHEBI:30616"/>
    </ligand>
</feature>
<feature type="binding site" evidence="6 13">
    <location>
        <position position="317"/>
    </location>
    <ligand>
        <name>ATP</name>
        <dbReference type="ChEBI" id="CHEBI:30616"/>
    </ligand>
</feature>
<feature type="binding site" evidence="6">
    <location>
        <begin position="362"/>
        <end position="368"/>
    </location>
    <ligand>
        <name>ATP</name>
        <dbReference type="ChEBI" id="CHEBI:30616"/>
    </ligand>
</feature>
<feature type="modified residue" description="Phosphoserine" evidence="2">
    <location>
        <position position="97"/>
    </location>
</feature>
<feature type="modified residue" description="Phosphotyrosine" evidence="2">
    <location>
        <position position="116"/>
    </location>
</feature>
<feature type="modified residue" description="Phosphotyrosine" evidence="2">
    <location>
        <position position="161"/>
    </location>
</feature>
<feature type="modified residue" description="Phosphotyrosine" evidence="2">
    <location>
        <position position="174"/>
    </location>
</feature>
<feature type="modified residue" description="Phosphotyrosine" evidence="2">
    <location>
        <position position="185"/>
    </location>
</feature>
<feature type="modified residue" description="Phosphotyrosine" evidence="2">
    <location>
        <position position="218"/>
    </location>
</feature>
<feature type="modified residue" description="Phosphotyrosine" evidence="2">
    <location>
        <position position="231"/>
    </location>
</feature>
<feature type="modified residue" description="Phosphotyrosine; by ABL1 and autocatalysis" evidence="4">
    <location>
        <position position="261"/>
    </location>
</feature>
<feature type="modified residue" description="Phosphotyrosine; by autocatalysis" evidence="13">
    <location>
        <position position="272"/>
    </location>
</feature>
<feature type="modified residue" description="Phosphoserine" evidence="4">
    <location>
        <position position="275"/>
    </location>
</feature>
<feature type="modified residue" description="Phosphotyrosine" evidence="2">
    <location>
        <position position="299"/>
    </location>
</feature>
<feature type="modified residue" description="Phosphotyrosine" evidence="2">
    <location>
        <position position="303"/>
    </location>
</feature>
<feature type="modified residue" description="Phosphotyrosine; by autocatalysis and SRC-type Tyr-kinases" evidence="4">
    <location>
        <position position="439"/>
    </location>
</feature>
<feature type="modified residue" description="Phosphotyrosine" evidence="2">
    <location>
        <position position="459"/>
    </location>
</feature>
<feature type="modified residue" description="Phosphotyrosine; by autocatalysis" evidence="13">
    <location>
        <position position="568"/>
    </location>
</feature>
<feature type="modified residue" description="Phosphoserine" evidence="2">
    <location>
        <position position="606"/>
    </location>
</feature>
<feature type="modified residue" description="Phosphoserine" evidence="23 24">
    <location>
        <position position="621"/>
    </location>
</feature>
<feature type="modified residue" description="Phosphoserine" evidence="23 24">
    <location>
        <position position="632"/>
    </location>
</feature>
<feature type="modified residue" description="Phosphoserine" evidence="4">
    <location>
        <position position="634"/>
    </location>
</feature>
<feature type="modified residue" description="Phosphoserine" evidence="4">
    <location>
        <position position="656"/>
    </location>
</feature>
<feature type="modified residue" description="Phosphoserine" evidence="2">
    <location>
        <position position="670"/>
    </location>
</feature>
<feature type="modified residue" description="Phosphoserine" evidence="2">
    <location>
        <position position="671"/>
    </location>
</feature>
<feature type="modified residue" description="Phosphoserine" evidence="4">
    <location>
        <position position="672"/>
    </location>
</feature>
<feature type="modified residue" description="Phosphotyrosine; by autocatalysis" evidence="13">
    <location>
        <position position="684"/>
    </location>
</feature>
<feature type="modified residue" description="Phosphotyrosine" evidence="4">
    <location>
        <position position="719"/>
    </location>
</feature>
<feature type="modified residue" description="N6-acetyllysine" evidence="2">
    <location>
        <position position="778"/>
    </location>
</feature>
<feature type="modified residue" description="Phosphoserine" evidence="4">
    <location>
        <position position="785"/>
    </location>
</feature>
<feature type="modified residue" description="Phosphothreonine" evidence="2">
    <location>
        <position position="802"/>
    </location>
</feature>
<feature type="modified residue" description="Phosphoserine" evidence="4">
    <location>
        <position position="819"/>
    </location>
</feature>
<feature type="modified residue" description="Phosphoserine" evidence="24">
    <location>
        <position position="822"/>
    </location>
</feature>
<feature type="modified residue" description="Phosphoserine" evidence="4">
    <location>
        <position position="915"/>
    </location>
</feature>
<feature type="modified residue" description="Phosphoserine" evidence="23">
    <location>
        <position position="936"/>
    </location>
</feature>
<feature type="lipid moiety-binding region" description="N-myristoyl glycine" evidence="2">
    <location>
        <position position="2"/>
    </location>
</feature>
<feature type="mutagenesis site" description="Minimal reduction in ability to autophosphorylate." evidence="13">
    <original>Y</original>
    <variation>F</variation>
    <location>
        <position position="272"/>
    </location>
</feature>
<feature type="mutagenesis site" description="Loss of kinase activity." evidence="13">
    <original>K</original>
    <variation>M</variation>
    <location>
        <position position="317"/>
    </location>
</feature>
<feature type="mutagenesis site" description="Partial reduction in ability to autophosphorylate." evidence="13">
    <original>Y</original>
    <variation>F</variation>
    <location>
        <position position="439"/>
    </location>
</feature>
<feature type="mutagenesis site" description="No reduction in ability to autophosphorylate." evidence="13">
    <original>Y</original>
    <variation>F</variation>
    <location>
        <position position="568"/>
    </location>
</feature>
<feature type="mutagenesis site" description="Minimal reduction in ability to autophosphorylate." evidence="13">
    <original>Y</original>
    <variation>F</variation>
    <location>
        <position position="684"/>
    </location>
</feature>
<feature type="helix" evidence="25">
    <location>
        <begin position="285"/>
        <end position="287"/>
    </location>
</feature>
<feature type="strand" evidence="25">
    <location>
        <begin position="288"/>
        <end position="295"/>
    </location>
</feature>
<feature type="strand" evidence="25">
    <location>
        <begin position="302"/>
        <end position="307"/>
    </location>
</feature>
<feature type="helix" evidence="25">
    <location>
        <begin position="308"/>
        <end position="310"/>
    </location>
</feature>
<feature type="strand" evidence="25">
    <location>
        <begin position="312"/>
        <end position="319"/>
    </location>
</feature>
<feature type="helix" evidence="25">
    <location>
        <begin position="327"/>
        <end position="337"/>
    </location>
</feature>
<feature type="strand" evidence="25">
    <location>
        <begin position="347"/>
        <end position="351"/>
    </location>
</feature>
<feature type="strand" evidence="25">
    <location>
        <begin position="353"/>
        <end position="362"/>
    </location>
</feature>
<feature type="helix" evidence="25">
    <location>
        <begin position="369"/>
        <end position="375"/>
    </location>
</feature>
<feature type="turn" evidence="25">
    <location>
        <begin position="378"/>
        <end position="380"/>
    </location>
</feature>
<feature type="helix" evidence="25">
    <location>
        <begin position="383"/>
        <end position="402"/>
    </location>
</feature>
<feature type="helix" evidence="25">
    <location>
        <begin position="412"/>
        <end position="414"/>
    </location>
</feature>
<feature type="strand" evidence="25">
    <location>
        <begin position="415"/>
        <end position="417"/>
    </location>
</feature>
<feature type="helix" evidence="25">
    <location>
        <begin position="419"/>
        <end position="421"/>
    </location>
</feature>
<feature type="strand" evidence="25">
    <location>
        <begin position="423"/>
        <end position="425"/>
    </location>
</feature>
<feature type="strand" evidence="25">
    <location>
        <begin position="435"/>
        <end position="437"/>
    </location>
</feature>
<feature type="helix" evidence="25">
    <location>
        <begin position="449"/>
        <end position="451"/>
    </location>
</feature>
<feature type="helix" evidence="25">
    <location>
        <begin position="454"/>
        <end position="459"/>
    </location>
</feature>
<feature type="helix" evidence="25">
    <location>
        <begin position="464"/>
        <end position="479"/>
    </location>
</feature>
<feature type="helix" evidence="25">
    <location>
        <begin position="491"/>
        <end position="493"/>
    </location>
</feature>
<feature type="helix" evidence="25">
    <location>
        <begin position="494"/>
        <end position="499"/>
    </location>
</feature>
<feature type="helix" evidence="25">
    <location>
        <begin position="512"/>
        <end position="521"/>
    </location>
</feature>
<feature type="helix" evidence="25">
    <location>
        <begin position="526"/>
        <end position="528"/>
    </location>
</feature>
<feature type="helix" evidence="25">
    <location>
        <begin position="532"/>
        <end position="545"/>
    </location>
</feature>
<evidence type="ECO:0000250" key="1"/>
<evidence type="ECO:0000250" key="2">
    <source>
        <dbReference type="UniProtKB" id="P00519"/>
    </source>
</evidence>
<evidence type="ECO:0000250" key="3">
    <source>
        <dbReference type="UniProtKB" id="P28523"/>
    </source>
</evidence>
<evidence type="ECO:0000250" key="4">
    <source>
        <dbReference type="UniProtKB" id="P42684"/>
    </source>
</evidence>
<evidence type="ECO:0000255" key="5"/>
<evidence type="ECO:0000255" key="6">
    <source>
        <dbReference type="PROSITE-ProRule" id="PRU00159"/>
    </source>
</evidence>
<evidence type="ECO:0000255" key="7">
    <source>
        <dbReference type="PROSITE-ProRule" id="PRU00191"/>
    </source>
</evidence>
<evidence type="ECO:0000255" key="8">
    <source>
        <dbReference type="PROSITE-ProRule" id="PRU00192"/>
    </source>
</evidence>
<evidence type="ECO:0000255" key="9">
    <source>
        <dbReference type="PROSITE-ProRule" id="PRU10028"/>
    </source>
</evidence>
<evidence type="ECO:0000256" key="10">
    <source>
        <dbReference type="SAM" id="MobiDB-lite"/>
    </source>
</evidence>
<evidence type="ECO:0000269" key="11">
    <source>
    </source>
</evidence>
<evidence type="ECO:0000269" key="12">
    <source>
    </source>
</evidence>
<evidence type="ECO:0000269" key="13">
    <source>
    </source>
</evidence>
<evidence type="ECO:0000269" key="14">
    <source>
    </source>
</evidence>
<evidence type="ECO:0000269" key="15">
    <source>
    </source>
</evidence>
<evidence type="ECO:0000269" key="16">
    <source>
    </source>
</evidence>
<evidence type="ECO:0000269" key="17">
    <source>
    </source>
</evidence>
<evidence type="ECO:0000269" key="18">
    <source>
    </source>
</evidence>
<evidence type="ECO:0000269" key="19">
    <source>
    </source>
</evidence>
<evidence type="ECO:0000305" key="20"/>
<evidence type="ECO:0000312" key="21">
    <source>
        <dbReference type="EMBL" id="AAY86039.1"/>
    </source>
</evidence>
<evidence type="ECO:0000312" key="22">
    <source>
        <dbReference type="MGI" id="MGI:87860"/>
    </source>
</evidence>
<evidence type="ECO:0007744" key="23">
    <source>
    </source>
</evidence>
<evidence type="ECO:0007744" key="24">
    <source>
    </source>
</evidence>
<evidence type="ECO:0007829" key="25">
    <source>
        <dbReference type="PDB" id="4XLI"/>
    </source>
</evidence>